<gene>
    <name evidence="1" type="primary">trmD</name>
    <name type="ordered locus">PFL_1096</name>
</gene>
<comment type="function">
    <text evidence="1">Specifically methylates guanosine-37 in various tRNAs.</text>
</comment>
<comment type="catalytic activity">
    <reaction evidence="1">
        <text>guanosine(37) in tRNA + S-adenosyl-L-methionine = N(1)-methylguanosine(37) in tRNA + S-adenosyl-L-homocysteine + H(+)</text>
        <dbReference type="Rhea" id="RHEA:36899"/>
        <dbReference type="Rhea" id="RHEA-COMP:10145"/>
        <dbReference type="Rhea" id="RHEA-COMP:10147"/>
        <dbReference type="ChEBI" id="CHEBI:15378"/>
        <dbReference type="ChEBI" id="CHEBI:57856"/>
        <dbReference type="ChEBI" id="CHEBI:59789"/>
        <dbReference type="ChEBI" id="CHEBI:73542"/>
        <dbReference type="ChEBI" id="CHEBI:74269"/>
        <dbReference type="EC" id="2.1.1.228"/>
    </reaction>
</comment>
<comment type="subunit">
    <text evidence="1">Homodimer.</text>
</comment>
<comment type="subcellular location">
    <subcellularLocation>
        <location evidence="1">Cytoplasm</location>
    </subcellularLocation>
</comment>
<comment type="similarity">
    <text evidence="1">Belongs to the RNA methyltransferase TrmD family.</text>
</comment>
<protein>
    <recommendedName>
        <fullName evidence="1">tRNA (guanine-N(1)-)-methyltransferase</fullName>
        <ecNumber evidence="1">2.1.1.228</ecNumber>
    </recommendedName>
    <alternativeName>
        <fullName evidence="1">M1G-methyltransferase</fullName>
    </alternativeName>
    <alternativeName>
        <fullName evidence="1">tRNA [GM37] methyltransferase</fullName>
    </alternativeName>
</protein>
<accession>Q4KHQ6</accession>
<organism>
    <name type="scientific">Pseudomonas fluorescens (strain ATCC BAA-477 / NRRL B-23932 / Pf-5)</name>
    <dbReference type="NCBI Taxonomy" id="220664"/>
    <lineage>
        <taxon>Bacteria</taxon>
        <taxon>Pseudomonadati</taxon>
        <taxon>Pseudomonadota</taxon>
        <taxon>Gammaproteobacteria</taxon>
        <taxon>Pseudomonadales</taxon>
        <taxon>Pseudomonadaceae</taxon>
        <taxon>Pseudomonas</taxon>
    </lineage>
</organism>
<sequence>MANLRVEVISLFPEMFSAISEYGITSRAVKQGLLQLTCWNPRDYTTDRHHTVDDRPFGGGPGMVMKIKPLEDALVQARNAAGEGAKVIYLSPQGRQLNQSAVRELANEDALILIAGRYEGIDERFIDAHVDEEWSIGDYVLSGGELPAMVLIDAVTRLLPGALGHVDSAEEDSFTDGLLDCPHYTRPEVYADQRVPDVLLSGNHAHIRRWRLQQSLGRTYERRADLLESRSLSGEEKKLLEEYLRERDDS</sequence>
<keyword id="KW-0963">Cytoplasm</keyword>
<keyword id="KW-0489">Methyltransferase</keyword>
<keyword id="KW-0949">S-adenosyl-L-methionine</keyword>
<keyword id="KW-0808">Transferase</keyword>
<keyword id="KW-0819">tRNA processing</keyword>
<dbReference type="EC" id="2.1.1.228" evidence="1"/>
<dbReference type="EMBL" id="CP000076">
    <property type="protein sequence ID" value="AAY90383.1"/>
    <property type="molecule type" value="Genomic_DNA"/>
</dbReference>
<dbReference type="SMR" id="Q4KHQ6"/>
<dbReference type="STRING" id="220664.PFL_1096"/>
<dbReference type="KEGG" id="pfl:PFL_1096"/>
<dbReference type="PATRIC" id="fig|220664.5.peg.1125"/>
<dbReference type="eggNOG" id="COG0336">
    <property type="taxonomic scope" value="Bacteria"/>
</dbReference>
<dbReference type="HOGENOM" id="CLU_047363_0_2_6"/>
<dbReference type="Proteomes" id="UP000008540">
    <property type="component" value="Chromosome"/>
</dbReference>
<dbReference type="GO" id="GO:0005829">
    <property type="term" value="C:cytosol"/>
    <property type="evidence" value="ECO:0007669"/>
    <property type="project" value="TreeGrafter"/>
</dbReference>
<dbReference type="GO" id="GO:0052906">
    <property type="term" value="F:tRNA (guanine(37)-N1)-methyltransferase activity"/>
    <property type="evidence" value="ECO:0007669"/>
    <property type="project" value="UniProtKB-UniRule"/>
</dbReference>
<dbReference type="GO" id="GO:0002939">
    <property type="term" value="P:tRNA N1-guanine methylation"/>
    <property type="evidence" value="ECO:0007669"/>
    <property type="project" value="TreeGrafter"/>
</dbReference>
<dbReference type="CDD" id="cd18080">
    <property type="entry name" value="TrmD-like"/>
    <property type="match status" value="1"/>
</dbReference>
<dbReference type="FunFam" id="1.10.1270.20:FF:000001">
    <property type="entry name" value="tRNA (guanine-N(1)-)-methyltransferase"/>
    <property type="match status" value="1"/>
</dbReference>
<dbReference type="FunFam" id="3.40.1280.10:FF:000001">
    <property type="entry name" value="tRNA (guanine-N(1)-)-methyltransferase"/>
    <property type="match status" value="1"/>
</dbReference>
<dbReference type="Gene3D" id="3.40.1280.10">
    <property type="match status" value="1"/>
</dbReference>
<dbReference type="Gene3D" id="1.10.1270.20">
    <property type="entry name" value="tRNA(m1g37)methyltransferase, domain 2"/>
    <property type="match status" value="1"/>
</dbReference>
<dbReference type="HAMAP" id="MF_00605">
    <property type="entry name" value="TrmD"/>
    <property type="match status" value="1"/>
</dbReference>
<dbReference type="InterPro" id="IPR029028">
    <property type="entry name" value="Alpha/beta_knot_MTases"/>
</dbReference>
<dbReference type="InterPro" id="IPR023148">
    <property type="entry name" value="tRNA_m1G_MeTrfase_C_sf"/>
</dbReference>
<dbReference type="InterPro" id="IPR002649">
    <property type="entry name" value="tRNA_m1G_MeTrfase_TrmD"/>
</dbReference>
<dbReference type="InterPro" id="IPR029026">
    <property type="entry name" value="tRNA_m1G_MTases_N"/>
</dbReference>
<dbReference type="InterPro" id="IPR016009">
    <property type="entry name" value="tRNA_MeTrfase_TRMD/TRM10"/>
</dbReference>
<dbReference type="NCBIfam" id="NF000648">
    <property type="entry name" value="PRK00026.1"/>
    <property type="match status" value="1"/>
</dbReference>
<dbReference type="NCBIfam" id="TIGR00088">
    <property type="entry name" value="trmD"/>
    <property type="match status" value="1"/>
</dbReference>
<dbReference type="PANTHER" id="PTHR46417">
    <property type="entry name" value="TRNA (GUANINE-N(1)-)-METHYLTRANSFERASE"/>
    <property type="match status" value="1"/>
</dbReference>
<dbReference type="PANTHER" id="PTHR46417:SF1">
    <property type="entry name" value="TRNA (GUANINE-N(1)-)-METHYLTRANSFERASE"/>
    <property type="match status" value="1"/>
</dbReference>
<dbReference type="Pfam" id="PF01746">
    <property type="entry name" value="tRNA_m1G_MT"/>
    <property type="match status" value="1"/>
</dbReference>
<dbReference type="PIRSF" id="PIRSF000386">
    <property type="entry name" value="tRNA_mtase"/>
    <property type="match status" value="1"/>
</dbReference>
<dbReference type="SUPFAM" id="SSF75217">
    <property type="entry name" value="alpha/beta knot"/>
    <property type="match status" value="1"/>
</dbReference>
<feature type="chain" id="PRO_0000060434" description="tRNA (guanine-N(1)-)-methyltransferase">
    <location>
        <begin position="1"/>
        <end position="250"/>
    </location>
</feature>
<feature type="binding site" evidence="1">
    <location>
        <position position="116"/>
    </location>
    <ligand>
        <name>S-adenosyl-L-methionine</name>
        <dbReference type="ChEBI" id="CHEBI:59789"/>
    </ligand>
</feature>
<feature type="binding site" evidence="1">
    <location>
        <begin position="136"/>
        <end position="141"/>
    </location>
    <ligand>
        <name>S-adenosyl-L-methionine</name>
        <dbReference type="ChEBI" id="CHEBI:59789"/>
    </ligand>
</feature>
<proteinExistence type="inferred from homology"/>
<evidence type="ECO:0000255" key="1">
    <source>
        <dbReference type="HAMAP-Rule" id="MF_00605"/>
    </source>
</evidence>
<reference key="1">
    <citation type="journal article" date="2005" name="Nat. Biotechnol.">
        <title>Complete genome sequence of the plant commensal Pseudomonas fluorescens Pf-5.</title>
        <authorList>
            <person name="Paulsen I.T."/>
            <person name="Press C.M."/>
            <person name="Ravel J."/>
            <person name="Kobayashi D.Y."/>
            <person name="Myers G.S.A."/>
            <person name="Mavrodi D.V."/>
            <person name="DeBoy R.T."/>
            <person name="Seshadri R."/>
            <person name="Ren Q."/>
            <person name="Madupu R."/>
            <person name="Dodson R.J."/>
            <person name="Durkin A.S."/>
            <person name="Brinkac L.M."/>
            <person name="Daugherty S.C."/>
            <person name="Sullivan S.A."/>
            <person name="Rosovitz M.J."/>
            <person name="Gwinn M.L."/>
            <person name="Zhou L."/>
            <person name="Schneider D.J."/>
            <person name="Cartinhour S.W."/>
            <person name="Nelson W.C."/>
            <person name="Weidman J."/>
            <person name="Watkins K."/>
            <person name="Tran K."/>
            <person name="Khouri H."/>
            <person name="Pierson E.A."/>
            <person name="Pierson L.S. III"/>
            <person name="Thomashow L.S."/>
            <person name="Loper J.E."/>
        </authorList>
    </citation>
    <scope>NUCLEOTIDE SEQUENCE [LARGE SCALE GENOMIC DNA]</scope>
    <source>
        <strain>ATCC BAA-477 / NRRL B-23932 / Pf-5</strain>
    </source>
</reference>
<name>TRMD_PSEF5</name>